<protein>
    <recommendedName>
        <fullName evidence="1">Glycine--tRNA ligase alpha subunit</fullName>
        <ecNumber evidence="1">6.1.1.14</ecNumber>
    </recommendedName>
    <alternativeName>
        <fullName evidence="1">Glycyl-tRNA synthetase alpha subunit</fullName>
        <shortName evidence="1">GlyRS</shortName>
    </alternativeName>
</protein>
<reference key="1">
    <citation type="journal article" date="2006" name="J. Bacteriol.">
        <title>Genome sequence of Aeromonas hydrophila ATCC 7966T: jack of all trades.</title>
        <authorList>
            <person name="Seshadri R."/>
            <person name="Joseph S.W."/>
            <person name="Chopra A.K."/>
            <person name="Sha J."/>
            <person name="Shaw J."/>
            <person name="Graf J."/>
            <person name="Haft D.H."/>
            <person name="Wu M."/>
            <person name="Ren Q."/>
            <person name="Rosovitz M.J."/>
            <person name="Madupu R."/>
            <person name="Tallon L."/>
            <person name="Kim M."/>
            <person name="Jin S."/>
            <person name="Vuong H."/>
            <person name="Stine O.C."/>
            <person name="Ali A."/>
            <person name="Horneman A.J."/>
            <person name="Heidelberg J.F."/>
        </authorList>
    </citation>
    <scope>NUCLEOTIDE SEQUENCE [LARGE SCALE GENOMIC DNA]</scope>
    <source>
        <strain>ATCC 7966 / DSM 30187 / BCRC 13018 / CCUG 14551 / JCM 1027 / KCTC 2358 / NCIMB 9240 / NCTC 8049</strain>
    </source>
</reference>
<keyword id="KW-0030">Aminoacyl-tRNA synthetase</keyword>
<keyword id="KW-0067">ATP-binding</keyword>
<keyword id="KW-0963">Cytoplasm</keyword>
<keyword id="KW-0436">Ligase</keyword>
<keyword id="KW-0547">Nucleotide-binding</keyword>
<keyword id="KW-0648">Protein biosynthesis</keyword>
<keyword id="KW-1185">Reference proteome</keyword>
<feature type="chain" id="PRO_1000047393" description="Glycine--tRNA ligase alpha subunit">
    <location>
        <begin position="1"/>
        <end position="307"/>
    </location>
</feature>
<evidence type="ECO:0000255" key="1">
    <source>
        <dbReference type="HAMAP-Rule" id="MF_00254"/>
    </source>
</evidence>
<proteinExistence type="inferred from homology"/>
<organism>
    <name type="scientific">Aeromonas hydrophila subsp. hydrophila (strain ATCC 7966 / DSM 30187 / BCRC 13018 / CCUG 14551 / JCM 1027 / KCTC 2358 / NCIMB 9240 / NCTC 8049)</name>
    <dbReference type="NCBI Taxonomy" id="380703"/>
    <lineage>
        <taxon>Bacteria</taxon>
        <taxon>Pseudomonadati</taxon>
        <taxon>Pseudomonadota</taxon>
        <taxon>Gammaproteobacteria</taxon>
        <taxon>Aeromonadales</taxon>
        <taxon>Aeromonadaceae</taxon>
        <taxon>Aeromonas</taxon>
    </lineage>
</organism>
<gene>
    <name evidence="1" type="primary">glyQ</name>
    <name type="ordered locus">AHA_0128</name>
</gene>
<dbReference type="EC" id="6.1.1.14" evidence="1"/>
<dbReference type="EMBL" id="CP000462">
    <property type="protein sequence ID" value="ABK36453.1"/>
    <property type="molecule type" value="Genomic_DNA"/>
</dbReference>
<dbReference type="RefSeq" id="WP_005339464.1">
    <property type="nucleotide sequence ID" value="NC_008570.1"/>
</dbReference>
<dbReference type="RefSeq" id="YP_854663.1">
    <property type="nucleotide sequence ID" value="NC_008570.1"/>
</dbReference>
<dbReference type="SMR" id="A0KEK0"/>
<dbReference type="STRING" id="380703.AHA_0128"/>
<dbReference type="EnsemblBacteria" id="ABK36453">
    <property type="protein sequence ID" value="ABK36453"/>
    <property type="gene ID" value="AHA_0128"/>
</dbReference>
<dbReference type="GeneID" id="92809966"/>
<dbReference type="KEGG" id="aha:AHA_0128"/>
<dbReference type="PATRIC" id="fig|380703.7.peg.121"/>
<dbReference type="eggNOG" id="COG0752">
    <property type="taxonomic scope" value="Bacteria"/>
</dbReference>
<dbReference type="HOGENOM" id="CLU_057066_1_0_6"/>
<dbReference type="OrthoDB" id="9802183at2"/>
<dbReference type="Proteomes" id="UP000000756">
    <property type="component" value="Chromosome"/>
</dbReference>
<dbReference type="GO" id="GO:0005829">
    <property type="term" value="C:cytosol"/>
    <property type="evidence" value="ECO:0007669"/>
    <property type="project" value="TreeGrafter"/>
</dbReference>
<dbReference type="GO" id="GO:0005524">
    <property type="term" value="F:ATP binding"/>
    <property type="evidence" value="ECO:0007669"/>
    <property type="project" value="UniProtKB-UniRule"/>
</dbReference>
<dbReference type="GO" id="GO:0004820">
    <property type="term" value="F:glycine-tRNA ligase activity"/>
    <property type="evidence" value="ECO:0007669"/>
    <property type="project" value="UniProtKB-UniRule"/>
</dbReference>
<dbReference type="GO" id="GO:0006426">
    <property type="term" value="P:glycyl-tRNA aminoacylation"/>
    <property type="evidence" value="ECO:0007669"/>
    <property type="project" value="UniProtKB-UniRule"/>
</dbReference>
<dbReference type="CDD" id="cd00733">
    <property type="entry name" value="GlyRS_alpha_core"/>
    <property type="match status" value="1"/>
</dbReference>
<dbReference type="FunFam" id="1.20.58.180:FF:000001">
    <property type="entry name" value="Glycine--tRNA ligase alpha subunit"/>
    <property type="match status" value="1"/>
</dbReference>
<dbReference type="FunFam" id="3.30.930.10:FF:000006">
    <property type="entry name" value="Glycine--tRNA ligase alpha subunit"/>
    <property type="match status" value="1"/>
</dbReference>
<dbReference type="Gene3D" id="3.30.930.10">
    <property type="entry name" value="Bira Bifunctional Protein, Domain 2"/>
    <property type="match status" value="1"/>
</dbReference>
<dbReference type="Gene3D" id="1.20.58.180">
    <property type="entry name" value="Class II aaRS and biotin synthetases, domain 2"/>
    <property type="match status" value="1"/>
</dbReference>
<dbReference type="HAMAP" id="MF_00254">
    <property type="entry name" value="Gly_tRNA_synth_alpha"/>
    <property type="match status" value="1"/>
</dbReference>
<dbReference type="InterPro" id="IPR045864">
    <property type="entry name" value="aa-tRNA-synth_II/BPL/LPL"/>
</dbReference>
<dbReference type="InterPro" id="IPR006194">
    <property type="entry name" value="Gly-tRNA-synth_heterodimer"/>
</dbReference>
<dbReference type="InterPro" id="IPR002310">
    <property type="entry name" value="Gly-tRNA_ligase_asu"/>
</dbReference>
<dbReference type="NCBIfam" id="TIGR00388">
    <property type="entry name" value="glyQ"/>
    <property type="match status" value="1"/>
</dbReference>
<dbReference type="NCBIfam" id="NF006827">
    <property type="entry name" value="PRK09348.1"/>
    <property type="match status" value="1"/>
</dbReference>
<dbReference type="PANTHER" id="PTHR30075:SF2">
    <property type="entry name" value="GLYCINE--TRNA LIGASE, CHLOROPLASTIC_MITOCHONDRIAL 2"/>
    <property type="match status" value="1"/>
</dbReference>
<dbReference type="PANTHER" id="PTHR30075">
    <property type="entry name" value="GLYCYL-TRNA SYNTHETASE"/>
    <property type="match status" value="1"/>
</dbReference>
<dbReference type="Pfam" id="PF02091">
    <property type="entry name" value="tRNA-synt_2e"/>
    <property type="match status" value="1"/>
</dbReference>
<dbReference type="PRINTS" id="PR01044">
    <property type="entry name" value="TRNASYNTHGA"/>
</dbReference>
<dbReference type="SUPFAM" id="SSF55681">
    <property type="entry name" value="Class II aaRS and biotin synthetases"/>
    <property type="match status" value="1"/>
</dbReference>
<dbReference type="PROSITE" id="PS50861">
    <property type="entry name" value="AA_TRNA_LIGASE_II_GLYAB"/>
    <property type="match status" value="1"/>
</dbReference>
<sequence>MQKFDVKTFQGLILQLQDYWSRQGCTIIQPLDMEVGAGTSHPMTCLRALGPEPIACAYVQPSRRPTDGRYGENPNRLQHYYQFQVIIKPSPDNIQELYLGSLKELGMDPEIHDIRFVEDNWENPTLGAWGLGWEVWLNGMEVTQFTYFQQVGGLECKPVTGEITYGLERLAMYIQGVDSVYDLVWSDGPLGKTTYGDVFHQNEVEQSTYNFEHADVEFLFHCFEQYEKEAQNLLALEKPLPLPAYERILKAAHSFNLLDARKAISVTERQRYILRIRTLTKAVAEAYYASREALGFPMCQRSENKQG</sequence>
<comment type="catalytic activity">
    <reaction evidence="1">
        <text>tRNA(Gly) + glycine + ATP = glycyl-tRNA(Gly) + AMP + diphosphate</text>
        <dbReference type="Rhea" id="RHEA:16013"/>
        <dbReference type="Rhea" id="RHEA-COMP:9664"/>
        <dbReference type="Rhea" id="RHEA-COMP:9683"/>
        <dbReference type="ChEBI" id="CHEBI:30616"/>
        <dbReference type="ChEBI" id="CHEBI:33019"/>
        <dbReference type="ChEBI" id="CHEBI:57305"/>
        <dbReference type="ChEBI" id="CHEBI:78442"/>
        <dbReference type="ChEBI" id="CHEBI:78522"/>
        <dbReference type="ChEBI" id="CHEBI:456215"/>
        <dbReference type="EC" id="6.1.1.14"/>
    </reaction>
</comment>
<comment type="subunit">
    <text evidence="1">Tetramer of two alpha and two beta subunits.</text>
</comment>
<comment type="subcellular location">
    <subcellularLocation>
        <location evidence="1">Cytoplasm</location>
    </subcellularLocation>
</comment>
<comment type="similarity">
    <text evidence="1">Belongs to the class-II aminoacyl-tRNA synthetase family.</text>
</comment>
<accession>A0KEK0</accession>
<name>SYGA_AERHH</name>